<keyword id="KW-1003">Cell membrane</keyword>
<keyword id="KW-0472">Membrane</keyword>
<keyword id="KW-1185">Reference proteome</keyword>
<keyword id="KW-0812">Transmembrane</keyword>
<keyword id="KW-1133">Transmembrane helix</keyword>
<comment type="subcellular location">
    <subcellularLocation>
        <location evidence="1">Cell membrane</location>
        <topology evidence="1">Multi-pass membrane protein</topology>
    </subcellularLocation>
</comment>
<comment type="similarity">
    <text evidence="1">Belongs to the UPF0182 family.</text>
</comment>
<proteinExistence type="inferred from homology"/>
<reference key="1">
    <citation type="journal article" date="2006" name="Nat. Biotechnol.">
        <title>Genome sequence of the bioplastic-producing 'Knallgas' bacterium Ralstonia eutropha H16.</title>
        <authorList>
            <person name="Pohlmann A."/>
            <person name="Fricke W.F."/>
            <person name="Reinecke F."/>
            <person name="Kusian B."/>
            <person name="Liesegang H."/>
            <person name="Cramm R."/>
            <person name="Eitinger T."/>
            <person name="Ewering C."/>
            <person name="Poetter M."/>
            <person name="Schwartz E."/>
            <person name="Strittmatter A."/>
            <person name="Voss I."/>
            <person name="Gottschalk G."/>
            <person name="Steinbuechel A."/>
            <person name="Friedrich B."/>
            <person name="Bowien B."/>
        </authorList>
    </citation>
    <scope>NUCLEOTIDE SEQUENCE [LARGE SCALE GENOMIC DNA]</scope>
    <source>
        <strain>ATCC 17699 / DSM 428 / KCTC 22496 / NCIMB 10442 / H16 / Stanier 337</strain>
    </source>
</reference>
<protein>
    <recommendedName>
        <fullName evidence="1">UPF0182 protein H16_A1615</fullName>
    </recommendedName>
</protein>
<organism>
    <name type="scientific">Cupriavidus necator (strain ATCC 17699 / DSM 428 / KCTC 22496 / NCIMB 10442 / H16 / Stanier 337)</name>
    <name type="common">Ralstonia eutropha</name>
    <dbReference type="NCBI Taxonomy" id="381666"/>
    <lineage>
        <taxon>Bacteria</taxon>
        <taxon>Pseudomonadati</taxon>
        <taxon>Pseudomonadota</taxon>
        <taxon>Betaproteobacteria</taxon>
        <taxon>Burkholderiales</taxon>
        <taxon>Burkholderiaceae</taxon>
        <taxon>Cupriavidus</taxon>
    </lineage>
</organism>
<name>Y1615_CUPNH</name>
<evidence type="ECO:0000255" key="1">
    <source>
        <dbReference type="HAMAP-Rule" id="MF_01600"/>
    </source>
</evidence>
<dbReference type="EMBL" id="AM260479">
    <property type="protein sequence ID" value="CAJ92747.1"/>
    <property type="molecule type" value="Genomic_DNA"/>
</dbReference>
<dbReference type="RefSeq" id="WP_011615189.1">
    <property type="nucleotide sequence ID" value="NC_008313.1"/>
</dbReference>
<dbReference type="SMR" id="Q0KB74"/>
<dbReference type="STRING" id="381666.H16_A1615"/>
<dbReference type="KEGG" id="reh:H16_A1615"/>
<dbReference type="PATRIC" id="fig|381666.6.peg.1999"/>
<dbReference type="eggNOG" id="COG1615">
    <property type="taxonomic scope" value="Bacteria"/>
</dbReference>
<dbReference type="HOGENOM" id="CLU_007733_0_0_4"/>
<dbReference type="OrthoDB" id="9763654at2"/>
<dbReference type="Proteomes" id="UP000008210">
    <property type="component" value="Chromosome 1"/>
</dbReference>
<dbReference type="GO" id="GO:0005576">
    <property type="term" value="C:extracellular region"/>
    <property type="evidence" value="ECO:0007669"/>
    <property type="project" value="TreeGrafter"/>
</dbReference>
<dbReference type="GO" id="GO:0005886">
    <property type="term" value="C:plasma membrane"/>
    <property type="evidence" value="ECO:0007669"/>
    <property type="project" value="UniProtKB-SubCell"/>
</dbReference>
<dbReference type="HAMAP" id="MF_01600">
    <property type="entry name" value="UPF0182"/>
    <property type="match status" value="1"/>
</dbReference>
<dbReference type="InterPro" id="IPR005372">
    <property type="entry name" value="UPF0182"/>
</dbReference>
<dbReference type="PANTHER" id="PTHR39344">
    <property type="entry name" value="UPF0182 PROTEIN SLL1060"/>
    <property type="match status" value="1"/>
</dbReference>
<dbReference type="PANTHER" id="PTHR39344:SF1">
    <property type="entry name" value="UPF0182 PROTEIN SLL1060"/>
    <property type="match status" value="1"/>
</dbReference>
<dbReference type="Pfam" id="PF03699">
    <property type="entry name" value="UPF0182"/>
    <property type="match status" value="1"/>
</dbReference>
<accession>Q0KB74</accession>
<sequence length="909" mass="101006">MRSPARDATRLGRLATWVVAVIVALIAVSRVTGLVVDWMWFASVGYAGVFRTIFLTQALLFLAVFAVSAGALWLSGWLAHRSASQAQAWRPEVLGQPVGEIAARVPWRAAIAGVAVLVGLLMAVGELSSWAIALRYFHQVPFGKTDPIFAKDIGFYFFTLPAYLALRNWLLLLLGCSAVLAGVVYGLRGDIALVRSPRGLSPAAATHGSALLGLFFALQAWSYWLDRFMLLYGDNGVVVGASYTDVHVGLPVLWLQVGLAAAAAAASWANMRWRDYRVPAAAALLVVGSAIVLGTIWPALFQRFYVKPNELQLETPYLQHNIALTREAYGLTQIEVKPFPVEQNLNLAALQANRPTIDNIRLWDLQPLRDTYAQLQEIRTYYKFLATDIDRYQLGAGYQQVMLSARELEPALIPANAQTWVNLHLLFTHGNGVVMSPVTEKSAEGLPSLYLHDIPPLSDGGPVIQEPRLYFGEGGKGYVIVKGSVPEFDYPKGKDNVYTAYRGRDGIGIGGIARRTLFAWHLGDPNILLSGYITQESRILLHRNIRNRVRTIAPFLSLDHDPYVVVSDGRLYWIQDAYTTSRWFPYSQPGTGGGANYIRNAVKVVIDAYNGTVDFYTSDPADPIVQVYQRIFPGMFRPLGAMSQDLQRHIRYPEDLFLIQARIYRAYHMEAAEVFYNREDLWEFPRQLTGMSTGNTPAARMMPYYMILRLPDEPRAEFVLMLPMVPSQRENMIAWLAARSDPPNYGKLVAYTFPKEKLVYGPFQIEARIQQNTEISQQISLWNQMGSRVIRGHLQVVPIENSILYVSPLYLRAESGQLPELKRVIAAYGDRVVMEDTLGAALAALFKESAPAAIPAQGAANARAREALAHYDRAVERLKAGDWSGFGAELDALRPLLEALGAGAADERK</sequence>
<feature type="chain" id="PRO_0000291290" description="UPF0182 protein H16_A1615">
    <location>
        <begin position="1"/>
        <end position="909"/>
    </location>
</feature>
<feature type="transmembrane region" description="Helical" evidence="1">
    <location>
        <begin position="16"/>
        <end position="36"/>
    </location>
</feature>
<feature type="transmembrane region" description="Helical" evidence="1">
    <location>
        <begin position="58"/>
        <end position="78"/>
    </location>
</feature>
<feature type="transmembrane region" description="Helical" evidence="1">
    <location>
        <begin position="114"/>
        <end position="134"/>
    </location>
</feature>
<feature type="transmembrane region" description="Helical" evidence="1">
    <location>
        <begin position="169"/>
        <end position="189"/>
    </location>
</feature>
<feature type="transmembrane region" description="Helical" evidence="1">
    <location>
        <begin position="205"/>
        <end position="225"/>
    </location>
</feature>
<feature type="transmembrane region" description="Helical" evidence="1">
    <location>
        <begin position="246"/>
        <end position="266"/>
    </location>
</feature>
<feature type="transmembrane region" description="Helical" evidence="1">
    <location>
        <begin position="281"/>
        <end position="301"/>
    </location>
</feature>
<gene>
    <name type="ordered locus">H16_A1615</name>
</gene>